<organism>
    <name type="scientific">Rhodopseudomonas palustris (strain HaA2)</name>
    <dbReference type="NCBI Taxonomy" id="316058"/>
    <lineage>
        <taxon>Bacteria</taxon>
        <taxon>Pseudomonadati</taxon>
        <taxon>Pseudomonadota</taxon>
        <taxon>Alphaproteobacteria</taxon>
        <taxon>Hyphomicrobiales</taxon>
        <taxon>Nitrobacteraceae</taxon>
        <taxon>Rhodopseudomonas</taxon>
    </lineage>
</organism>
<feature type="chain" id="PRO_0000297358" description="3-methyl-2-oxobutanoate hydroxymethyltransferase">
    <location>
        <begin position="1"/>
        <end position="274"/>
    </location>
</feature>
<feature type="active site" description="Proton acceptor" evidence="1">
    <location>
        <position position="187"/>
    </location>
</feature>
<feature type="binding site" evidence="1">
    <location>
        <begin position="49"/>
        <end position="50"/>
    </location>
    <ligand>
        <name>3-methyl-2-oxobutanoate</name>
        <dbReference type="ChEBI" id="CHEBI:11851"/>
    </ligand>
</feature>
<feature type="binding site" evidence="1">
    <location>
        <position position="49"/>
    </location>
    <ligand>
        <name>Mg(2+)</name>
        <dbReference type="ChEBI" id="CHEBI:18420"/>
    </ligand>
</feature>
<feature type="binding site" evidence="1">
    <location>
        <position position="88"/>
    </location>
    <ligand>
        <name>3-methyl-2-oxobutanoate</name>
        <dbReference type="ChEBI" id="CHEBI:11851"/>
    </ligand>
</feature>
<feature type="binding site" evidence="1">
    <location>
        <position position="88"/>
    </location>
    <ligand>
        <name>Mg(2+)</name>
        <dbReference type="ChEBI" id="CHEBI:18420"/>
    </ligand>
</feature>
<feature type="binding site" evidence="1">
    <location>
        <position position="118"/>
    </location>
    <ligand>
        <name>3-methyl-2-oxobutanoate</name>
        <dbReference type="ChEBI" id="CHEBI:11851"/>
    </ligand>
</feature>
<feature type="binding site" evidence="1">
    <location>
        <position position="120"/>
    </location>
    <ligand>
        <name>Mg(2+)</name>
        <dbReference type="ChEBI" id="CHEBI:18420"/>
    </ligand>
</feature>
<accession>Q2IXB0</accession>
<dbReference type="EC" id="2.1.2.11" evidence="1"/>
<dbReference type="EMBL" id="CP000250">
    <property type="protein sequence ID" value="ABD07150.1"/>
    <property type="molecule type" value="Genomic_DNA"/>
</dbReference>
<dbReference type="RefSeq" id="WP_011441335.1">
    <property type="nucleotide sequence ID" value="NC_007778.1"/>
</dbReference>
<dbReference type="SMR" id="Q2IXB0"/>
<dbReference type="STRING" id="316058.RPB_2445"/>
<dbReference type="KEGG" id="rpb:RPB_2445"/>
<dbReference type="eggNOG" id="COG0413">
    <property type="taxonomic scope" value="Bacteria"/>
</dbReference>
<dbReference type="HOGENOM" id="CLU_036645_1_0_5"/>
<dbReference type="OrthoDB" id="9781789at2"/>
<dbReference type="UniPathway" id="UPA00028">
    <property type="reaction ID" value="UER00003"/>
</dbReference>
<dbReference type="Proteomes" id="UP000008809">
    <property type="component" value="Chromosome"/>
</dbReference>
<dbReference type="GO" id="GO:0005737">
    <property type="term" value="C:cytoplasm"/>
    <property type="evidence" value="ECO:0007669"/>
    <property type="project" value="UniProtKB-SubCell"/>
</dbReference>
<dbReference type="GO" id="GO:0003864">
    <property type="term" value="F:3-methyl-2-oxobutanoate hydroxymethyltransferase activity"/>
    <property type="evidence" value="ECO:0007669"/>
    <property type="project" value="UniProtKB-UniRule"/>
</dbReference>
<dbReference type="GO" id="GO:0000287">
    <property type="term" value="F:magnesium ion binding"/>
    <property type="evidence" value="ECO:0007669"/>
    <property type="project" value="TreeGrafter"/>
</dbReference>
<dbReference type="GO" id="GO:0015940">
    <property type="term" value="P:pantothenate biosynthetic process"/>
    <property type="evidence" value="ECO:0007669"/>
    <property type="project" value="UniProtKB-UniRule"/>
</dbReference>
<dbReference type="CDD" id="cd06557">
    <property type="entry name" value="KPHMT-like"/>
    <property type="match status" value="1"/>
</dbReference>
<dbReference type="FunFam" id="3.20.20.60:FF:000003">
    <property type="entry name" value="3-methyl-2-oxobutanoate hydroxymethyltransferase"/>
    <property type="match status" value="1"/>
</dbReference>
<dbReference type="Gene3D" id="3.20.20.60">
    <property type="entry name" value="Phosphoenolpyruvate-binding domains"/>
    <property type="match status" value="1"/>
</dbReference>
<dbReference type="HAMAP" id="MF_00156">
    <property type="entry name" value="PanB"/>
    <property type="match status" value="1"/>
</dbReference>
<dbReference type="InterPro" id="IPR003700">
    <property type="entry name" value="Pantoate_hydroxy_MeTrfase"/>
</dbReference>
<dbReference type="InterPro" id="IPR015813">
    <property type="entry name" value="Pyrv/PenolPyrv_kinase-like_dom"/>
</dbReference>
<dbReference type="InterPro" id="IPR040442">
    <property type="entry name" value="Pyrv_kinase-like_dom_sf"/>
</dbReference>
<dbReference type="NCBIfam" id="TIGR00222">
    <property type="entry name" value="panB"/>
    <property type="match status" value="1"/>
</dbReference>
<dbReference type="NCBIfam" id="NF001452">
    <property type="entry name" value="PRK00311.1"/>
    <property type="match status" value="1"/>
</dbReference>
<dbReference type="PANTHER" id="PTHR20881">
    <property type="entry name" value="3-METHYL-2-OXOBUTANOATE HYDROXYMETHYLTRANSFERASE"/>
    <property type="match status" value="1"/>
</dbReference>
<dbReference type="PANTHER" id="PTHR20881:SF0">
    <property type="entry name" value="3-METHYL-2-OXOBUTANOATE HYDROXYMETHYLTRANSFERASE"/>
    <property type="match status" value="1"/>
</dbReference>
<dbReference type="Pfam" id="PF02548">
    <property type="entry name" value="Pantoate_transf"/>
    <property type="match status" value="1"/>
</dbReference>
<dbReference type="PIRSF" id="PIRSF000388">
    <property type="entry name" value="Pantoate_hydroxy_MeTrfase"/>
    <property type="match status" value="1"/>
</dbReference>
<dbReference type="SUPFAM" id="SSF51621">
    <property type="entry name" value="Phosphoenolpyruvate/pyruvate domain"/>
    <property type="match status" value="1"/>
</dbReference>
<sequence length="274" mass="29238">MSVQTTIKRKTAPDIRARKGGDPIVMLTSYHAHTASLVDRYCDVILVGDSLGNVMHGFETTIPVTLEMMILQGHAVMRGSQHALVVVDMPFGSYEASKEQAFHSAARILKETHCGAVKLEGGVRMAETIAFLTERGIPVMGHIGLTPQSINTLGSFRAQGREEGSWEPIEADARAVADAGAFSVVVEAVAEPLGRKITETIAIPTIGIGASAACDGQVLVLEDMLGLSPRTPKFVKRYGELGPGIEAAIKGYAEEVRSRAFPGPEHVYGMKAKG</sequence>
<gene>
    <name evidence="1" type="primary">panB</name>
    <name type="ordered locus">RPB_2445</name>
</gene>
<protein>
    <recommendedName>
        <fullName evidence="1">3-methyl-2-oxobutanoate hydroxymethyltransferase</fullName>
        <ecNumber evidence="1">2.1.2.11</ecNumber>
    </recommendedName>
    <alternativeName>
        <fullName evidence="1">Ketopantoate hydroxymethyltransferase</fullName>
        <shortName evidence="1">KPHMT</shortName>
    </alternativeName>
</protein>
<evidence type="ECO:0000255" key="1">
    <source>
        <dbReference type="HAMAP-Rule" id="MF_00156"/>
    </source>
</evidence>
<keyword id="KW-0963">Cytoplasm</keyword>
<keyword id="KW-0460">Magnesium</keyword>
<keyword id="KW-0479">Metal-binding</keyword>
<keyword id="KW-0566">Pantothenate biosynthesis</keyword>
<keyword id="KW-1185">Reference proteome</keyword>
<keyword id="KW-0808">Transferase</keyword>
<name>PANB_RHOP2</name>
<proteinExistence type="inferred from homology"/>
<comment type="function">
    <text evidence="1">Catalyzes the reversible reaction in which hydroxymethyl group from 5,10-methylenetetrahydrofolate is transferred onto alpha-ketoisovalerate to form ketopantoate.</text>
</comment>
<comment type="catalytic activity">
    <reaction evidence="1">
        <text>3-methyl-2-oxobutanoate + (6R)-5,10-methylene-5,6,7,8-tetrahydrofolate + H2O = 2-dehydropantoate + (6S)-5,6,7,8-tetrahydrofolate</text>
        <dbReference type="Rhea" id="RHEA:11824"/>
        <dbReference type="ChEBI" id="CHEBI:11561"/>
        <dbReference type="ChEBI" id="CHEBI:11851"/>
        <dbReference type="ChEBI" id="CHEBI:15377"/>
        <dbReference type="ChEBI" id="CHEBI:15636"/>
        <dbReference type="ChEBI" id="CHEBI:57453"/>
        <dbReference type="EC" id="2.1.2.11"/>
    </reaction>
</comment>
<comment type="cofactor">
    <cofactor evidence="1">
        <name>Mg(2+)</name>
        <dbReference type="ChEBI" id="CHEBI:18420"/>
    </cofactor>
    <text evidence="1">Binds 1 Mg(2+) ion per subunit.</text>
</comment>
<comment type="pathway">
    <text evidence="1">Cofactor biosynthesis; (R)-pantothenate biosynthesis; (R)-pantoate from 3-methyl-2-oxobutanoate: step 1/2.</text>
</comment>
<comment type="subunit">
    <text evidence="1">Homodecamer; pentamer of dimers.</text>
</comment>
<comment type="subcellular location">
    <subcellularLocation>
        <location evidence="1">Cytoplasm</location>
    </subcellularLocation>
</comment>
<comment type="similarity">
    <text evidence="1">Belongs to the PanB family.</text>
</comment>
<reference key="1">
    <citation type="submission" date="2006-01" db="EMBL/GenBank/DDBJ databases">
        <title>Complete sequence of Rhodopseudomonas palustris HaA2.</title>
        <authorList>
            <consortium name="US DOE Joint Genome Institute"/>
            <person name="Copeland A."/>
            <person name="Lucas S."/>
            <person name="Lapidus A."/>
            <person name="Barry K."/>
            <person name="Detter J.C."/>
            <person name="Glavina T."/>
            <person name="Hammon N."/>
            <person name="Israni S."/>
            <person name="Pitluck S."/>
            <person name="Chain P."/>
            <person name="Malfatti S."/>
            <person name="Shin M."/>
            <person name="Vergez L."/>
            <person name="Schmutz J."/>
            <person name="Larimer F."/>
            <person name="Land M."/>
            <person name="Hauser L."/>
            <person name="Pelletier D.A."/>
            <person name="Kyrpides N."/>
            <person name="Anderson I."/>
            <person name="Oda Y."/>
            <person name="Harwood C.S."/>
            <person name="Richardson P."/>
        </authorList>
    </citation>
    <scope>NUCLEOTIDE SEQUENCE [LARGE SCALE GENOMIC DNA]</scope>
    <source>
        <strain>HaA2</strain>
    </source>
</reference>